<proteinExistence type="inferred from homology"/>
<sequence length="97" mass="10387">MNIRPLHDRVIVKRKEVETKSAGGIVLTGSAAAKSTRGEVLAVGNGRILENGEVKPLDVKVGDIVIFNDGYGVKSEKIDNEEVLIMSESDILAIVEA</sequence>
<organism>
    <name type="scientific">Shigella sonnei (strain Ss046)</name>
    <dbReference type="NCBI Taxonomy" id="300269"/>
    <lineage>
        <taxon>Bacteria</taxon>
        <taxon>Pseudomonadati</taxon>
        <taxon>Pseudomonadota</taxon>
        <taxon>Gammaproteobacteria</taxon>
        <taxon>Enterobacterales</taxon>
        <taxon>Enterobacteriaceae</taxon>
        <taxon>Shigella</taxon>
    </lineage>
</organism>
<keyword id="KW-0143">Chaperone</keyword>
<keyword id="KW-0963">Cytoplasm</keyword>
<keyword id="KW-1185">Reference proteome</keyword>
<protein>
    <recommendedName>
        <fullName evidence="1">Co-chaperonin GroES</fullName>
    </recommendedName>
    <alternativeName>
        <fullName evidence="1">10 kDa chaperonin</fullName>
    </alternativeName>
    <alternativeName>
        <fullName evidence="1">Chaperonin-10</fullName>
        <shortName evidence="1">Cpn10</shortName>
    </alternativeName>
</protein>
<comment type="function">
    <text evidence="1">Together with the chaperonin GroEL, plays an essential role in assisting protein folding. The GroEL-GroES system forms a nano-cage that allows encapsulation of the non-native substrate proteins and provides a physical environment optimized to promote and accelerate protein folding. GroES binds to the apical surface of the GroEL ring, thereby capping the opening of the GroEL channel.</text>
</comment>
<comment type="subunit">
    <text evidence="1">Heptamer of 7 subunits arranged in a ring. Interacts with the chaperonin GroEL.</text>
</comment>
<comment type="subcellular location">
    <subcellularLocation>
        <location evidence="1">Cytoplasm</location>
    </subcellularLocation>
</comment>
<comment type="similarity">
    <text evidence="1">Belongs to the GroES chaperonin family.</text>
</comment>
<reference key="1">
    <citation type="journal article" date="2005" name="Nucleic Acids Res.">
        <title>Genome dynamics and diversity of Shigella species, the etiologic agents of bacillary dysentery.</title>
        <authorList>
            <person name="Yang F."/>
            <person name="Yang J."/>
            <person name="Zhang X."/>
            <person name="Chen L."/>
            <person name="Jiang Y."/>
            <person name="Yan Y."/>
            <person name="Tang X."/>
            <person name="Wang J."/>
            <person name="Xiong Z."/>
            <person name="Dong J."/>
            <person name="Xue Y."/>
            <person name="Zhu Y."/>
            <person name="Xu X."/>
            <person name="Sun L."/>
            <person name="Chen S."/>
            <person name="Nie H."/>
            <person name="Peng J."/>
            <person name="Xu J."/>
            <person name="Wang Y."/>
            <person name="Yuan Z."/>
            <person name="Wen Y."/>
            <person name="Yao Z."/>
            <person name="Shen Y."/>
            <person name="Qiang B."/>
            <person name="Hou Y."/>
            <person name="Yu J."/>
            <person name="Jin Q."/>
        </authorList>
    </citation>
    <scope>NUCLEOTIDE SEQUENCE [LARGE SCALE GENOMIC DNA]</scope>
    <source>
        <strain>Ss046</strain>
    </source>
</reference>
<feature type="chain" id="PRO_1000025372" description="Co-chaperonin GroES">
    <location>
        <begin position="1"/>
        <end position="97"/>
    </location>
</feature>
<dbReference type="EMBL" id="CP000038">
    <property type="protein sequence ID" value="AAZ90814.1"/>
    <property type="molecule type" value="Genomic_DNA"/>
</dbReference>
<dbReference type="RefSeq" id="WP_001026276.1">
    <property type="nucleotide sequence ID" value="NC_007384.1"/>
</dbReference>
<dbReference type="SMR" id="Q3YUJ8"/>
<dbReference type="KEGG" id="ssn:SSON_4325"/>
<dbReference type="HOGENOM" id="CLU_132825_1_1_6"/>
<dbReference type="Proteomes" id="UP000002529">
    <property type="component" value="Chromosome"/>
</dbReference>
<dbReference type="GO" id="GO:0005737">
    <property type="term" value="C:cytoplasm"/>
    <property type="evidence" value="ECO:0007669"/>
    <property type="project" value="UniProtKB-SubCell"/>
</dbReference>
<dbReference type="GO" id="GO:0005524">
    <property type="term" value="F:ATP binding"/>
    <property type="evidence" value="ECO:0007669"/>
    <property type="project" value="InterPro"/>
</dbReference>
<dbReference type="GO" id="GO:0046872">
    <property type="term" value="F:metal ion binding"/>
    <property type="evidence" value="ECO:0007669"/>
    <property type="project" value="TreeGrafter"/>
</dbReference>
<dbReference type="GO" id="GO:0044183">
    <property type="term" value="F:protein folding chaperone"/>
    <property type="evidence" value="ECO:0007669"/>
    <property type="project" value="InterPro"/>
</dbReference>
<dbReference type="GO" id="GO:0051087">
    <property type="term" value="F:protein-folding chaperone binding"/>
    <property type="evidence" value="ECO:0007669"/>
    <property type="project" value="TreeGrafter"/>
</dbReference>
<dbReference type="GO" id="GO:0051082">
    <property type="term" value="F:unfolded protein binding"/>
    <property type="evidence" value="ECO:0007669"/>
    <property type="project" value="TreeGrafter"/>
</dbReference>
<dbReference type="GO" id="GO:0051085">
    <property type="term" value="P:chaperone cofactor-dependent protein refolding"/>
    <property type="evidence" value="ECO:0007669"/>
    <property type="project" value="TreeGrafter"/>
</dbReference>
<dbReference type="CDD" id="cd00320">
    <property type="entry name" value="cpn10"/>
    <property type="match status" value="1"/>
</dbReference>
<dbReference type="FunFam" id="2.30.33.40:FF:000001">
    <property type="entry name" value="10 kDa chaperonin"/>
    <property type="match status" value="1"/>
</dbReference>
<dbReference type="Gene3D" id="2.30.33.40">
    <property type="entry name" value="GroES chaperonin"/>
    <property type="match status" value="1"/>
</dbReference>
<dbReference type="HAMAP" id="MF_00580">
    <property type="entry name" value="CH10"/>
    <property type="match status" value="1"/>
</dbReference>
<dbReference type="InterPro" id="IPR020818">
    <property type="entry name" value="Chaperonin_GroES"/>
</dbReference>
<dbReference type="InterPro" id="IPR037124">
    <property type="entry name" value="Chaperonin_GroES_sf"/>
</dbReference>
<dbReference type="InterPro" id="IPR018369">
    <property type="entry name" value="Chaprnonin_Cpn10_CS"/>
</dbReference>
<dbReference type="InterPro" id="IPR011032">
    <property type="entry name" value="GroES-like_sf"/>
</dbReference>
<dbReference type="NCBIfam" id="NF001526">
    <property type="entry name" value="PRK00364.1-1"/>
    <property type="match status" value="1"/>
</dbReference>
<dbReference type="NCBIfam" id="NF001527">
    <property type="entry name" value="PRK00364.1-2"/>
    <property type="match status" value="1"/>
</dbReference>
<dbReference type="NCBIfam" id="NF001531">
    <property type="entry name" value="PRK00364.2-2"/>
    <property type="match status" value="1"/>
</dbReference>
<dbReference type="PANTHER" id="PTHR10772">
    <property type="entry name" value="10 KDA HEAT SHOCK PROTEIN"/>
    <property type="match status" value="1"/>
</dbReference>
<dbReference type="PANTHER" id="PTHR10772:SF58">
    <property type="entry name" value="CO-CHAPERONIN GROES"/>
    <property type="match status" value="1"/>
</dbReference>
<dbReference type="Pfam" id="PF00166">
    <property type="entry name" value="Cpn10"/>
    <property type="match status" value="1"/>
</dbReference>
<dbReference type="PRINTS" id="PR00297">
    <property type="entry name" value="CHAPERONIN10"/>
</dbReference>
<dbReference type="SMART" id="SM00883">
    <property type="entry name" value="Cpn10"/>
    <property type="match status" value="1"/>
</dbReference>
<dbReference type="SUPFAM" id="SSF50129">
    <property type="entry name" value="GroES-like"/>
    <property type="match status" value="1"/>
</dbReference>
<dbReference type="PROSITE" id="PS00681">
    <property type="entry name" value="CHAPERONINS_CPN10"/>
    <property type="match status" value="1"/>
</dbReference>
<name>CH10_SHISS</name>
<gene>
    <name evidence="1" type="primary">groES</name>
    <name evidence="1" type="synonym">groS</name>
    <name type="ordered locus">SSON_4325</name>
</gene>
<evidence type="ECO:0000255" key="1">
    <source>
        <dbReference type="HAMAP-Rule" id="MF_00580"/>
    </source>
</evidence>
<accession>Q3YUJ8</accession>